<evidence type="ECO:0000255" key="1">
    <source>
        <dbReference type="HAMAP-Rule" id="MF_01367"/>
    </source>
</evidence>
<evidence type="ECO:0000305" key="2"/>
<name>RL14_METEP</name>
<reference key="1">
    <citation type="submission" date="2007-12" db="EMBL/GenBank/DDBJ databases">
        <title>Complete sequence of Methylobacterium extorquens PA1.</title>
        <authorList>
            <consortium name="US DOE Joint Genome Institute"/>
            <person name="Copeland A."/>
            <person name="Lucas S."/>
            <person name="Lapidus A."/>
            <person name="Barry K."/>
            <person name="Glavina del Rio T."/>
            <person name="Dalin E."/>
            <person name="Tice H."/>
            <person name="Pitluck S."/>
            <person name="Saunders E."/>
            <person name="Brettin T."/>
            <person name="Bruce D."/>
            <person name="Detter J.C."/>
            <person name="Han C."/>
            <person name="Schmutz J."/>
            <person name="Larimer F."/>
            <person name="Land M."/>
            <person name="Hauser L."/>
            <person name="Kyrpides N."/>
            <person name="Kim E."/>
            <person name="Marx C."/>
            <person name="Richardson P."/>
        </authorList>
    </citation>
    <scope>NUCLEOTIDE SEQUENCE [LARGE SCALE GENOMIC DNA]</scope>
    <source>
        <strain>PA1</strain>
    </source>
</reference>
<organism>
    <name type="scientific">Methylorubrum extorquens (strain PA1)</name>
    <name type="common">Methylobacterium extorquens</name>
    <dbReference type="NCBI Taxonomy" id="419610"/>
    <lineage>
        <taxon>Bacteria</taxon>
        <taxon>Pseudomonadati</taxon>
        <taxon>Pseudomonadota</taxon>
        <taxon>Alphaproteobacteria</taxon>
        <taxon>Hyphomicrobiales</taxon>
        <taxon>Methylobacteriaceae</taxon>
        <taxon>Methylorubrum</taxon>
    </lineage>
</organism>
<accession>A9W4T0</accession>
<feature type="chain" id="PRO_1000144295" description="Large ribosomal subunit protein uL14">
    <location>
        <begin position="1"/>
        <end position="122"/>
    </location>
</feature>
<dbReference type="EMBL" id="CP000908">
    <property type="protein sequence ID" value="ABY30586.1"/>
    <property type="molecule type" value="Genomic_DNA"/>
</dbReference>
<dbReference type="RefSeq" id="WP_012253654.1">
    <property type="nucleotide sequence ID" value="NC_010172.1"/>
</dbReference>
<dbReference type="SMR" id="A9W4T0"/>
<dbReference type="GeneID" id="72989879"/>
<dbReference type="KEGG" id="mex:Mext_2191"/>
<dbReference type="eggNOG" id="COG0093">
    <property type="taxonomic scope" value="Bacteria"/>
</dbReference>
<dbReference type="HOGENOM" id="CLU_095071_2_1_5"/>
<dbReference type="BioCyc" id="MEXT419610:MEXT_RS11060-MONOMER"/>
<dbReference type="GO" id="GO:0022625">
    <property type="term" value="C:cytosolic large ribosomal subunit"/>
    <property type="evidence" value="ECO:0007669"/>
    <property type="project" value="TreeGrafter"/>
</dbReference>
<dbReference type="GO" id="GO:0070180">
    <property type="term" value="F:large ribosomal subunit rRNA binding"/>
    <property type="evidence" value="ECO:0007669"/>
    <property type="project" value="TreeGrafter"/>
</dbReference>
<dbReference type="GO" id="GO:0003735">
    <property type="term" value="F:structural constituent of ribosome"/>
    <property type="evidence" value="ECO:0007669"/>
    <property type="project" value="InterPro"/>
</dbReference>
<dbReference type="GO" id="GO:0006412">
    <property type="term" value="P:translation"/>
    <property type="evidence" value="ECO:0007669"/>
    <property type="project" value="UniProtKB-UniRule"/>
</dbReference>
<dbReference type="CDD" id="cd00337">
    <property type="entry name" value="Ribosomal_uL14"/>
    <property type="match status" value="1"/>
</dbReference>
<dbReference type="FunFam" id="2.40.150.20:FF:000001">
    <property type="entry name" value="50S ribosomal protein L14"/>
    <property type="match status" value="1"/>
</dbReference>
<dbReference type="Gene3D" id="2.40.150.20">
    <property type="entry name" value="Ribosomal protein L14"/>
    <property type="match status" value="1"/>
</dbReference>
<dbReference type="HAMAP" id="MF_01367">
    <property type="entry name" value="Ribosomal_uL14"/>
    <property type="match status" value="1"/>
</dbReference>
<dbReference type="InterPro" id="IPR000218">
    <property type="entry name" value="Ribosomal_uL14"/>
</dbReference>
<dbReference type="InterPro" id="IPR005745">
    <property type="entry name" value="Ribosomal_uL14_bac-type"/>
</dbReference>
<dbReference type="InterPro" id="IPR019972">
    <property type="entry name" value="Ribosomal_uL14_CS"/>
</dbReference>
<dbReference type="InterPro" id="IPR036853">
    <property type="entry name" value="Ribosomal_uL14_sf"/>
</dbReference>
<dbReference type="NCBIfam" id="TIGR01067">
    <property type="entry name" value="rplN_bact"/>
    <property type="match status" value="1"/>
</dbReference>
<dbReference type="PANTHER" id="PTHR11761">
    <property type="entry name" value="50S/60S RIBOSOMAL PROTEIN L14/L23"/>
    <property type="match status" value="1"/>
</dbReference>
<dbReference type="PANTHER" id="PTHR11761:SF3">
    <property type="entry name" value="LARGE RIBOSOMAL SUBUNIT PROTEIN UL14M"/>
    <property type="match status" value="1"/>
</dbReference>
<dbReference type="Pfam" id="PF00238">
    <property type="entry name" value="Ribosomal_L14"/>
    <property type="match status" value="1"/>
</dbReference>
<dbReference type="SMART" id="SM01374">
    <property type="entry name" value="Ribosomal_L14"/>
    <property type="match status" value="1"/>
</dbReference>
<dbReference type="SUPFAM" id="SSF50193">
    <property type="entry name" value="Ribosomal protein L14"/>
    <property type="match status" value="1"/>
</dbReference>
<dbReference type="PROSITE" id="PS00049">
    <property type="entry name" value="RIBOSOMAL_L14"/>
    <property type="match status" value="1"/>
</dbReference>
<comment type="function">
    <text evidence="1">Binds to 23S rRNA. Forms part of two intersubunit bridges in the 70S ribosome.</text>
</comment>
<comment type="subunit">
    <text evidence="1">Part of the 50S ribosomal subunit. Forms a cluster with proteins L3 and L19. In the 70S ribosome, L14 and L19 interact and together make contacts with the 16S rRNA in bridges B5 and B8.</text>
</comment>
<comment type="similarity">
    <text evidence="1">Belongs to the universal ribosomal protein uL14 family.</text>
</comment>
<keyword id="KW-0687">Ribonucleoprotein</keyword>
<keyword id="KW-0689">Ribosomal protein</keyword>
<keyword id="KW-0694">RNA-binding</keyword>
<keyword id="KW-0699">rRNA-binding</keyword>
<gene>
    <name evidence="1" type="primary">rplN</name>
    <name type="ordered locus">Mext_2191</name>
</gene>
<proteinExistence type="inferred from homology"/>
<protein>
    <recommendedName>
        <fullName evidence="1">Large ribosomal subunit protein uL14</fullName>
    </recommendedName>
    <alternativeName>
        <fullName evidence="2">50S ribosomal protein L14</fullName>
    </alternativeName>
</protein>
<sequence>MIQMQTNLDVADNSGARRVMCIKVLGGSKRKYAGVGDIIVVSVKEAIPRGRVKKGDVMKAVVVRTAKDVKRADGSVIRFDKNAAVLINNQKEPVGTRIFGPVPRELRARNHMKIISLAPEVL</sequence>